<keyword id="KW-0153">Cholesterol metabolism</keyword>
<keyword id="KW-0345">HDL</keyword>
<keyword id="KW-0443">Lipid metabolism</keyword>
<keyword id="KW-0445">Lipid transport</keyword>
<keyword id="KW-0449">Lipoprotein</keyword>
<keyword id="KW-0558">Oxidation</keyword>
<keyword id="KW-0564">Palmitate</keyword>
<keyword id="KW-0597">Phosphoprotein</keyword>
<keyword id="KW-1185">Reference proteome</keyword>
<keyword id="KW-0677">Repeat</keyword>
<keyword id="KW-0964">Secreted</keyword>
<keyword id="KW-0732">Signal</keyword>
<keyword id="KW-0753">Steroid metabolism</keyword>
<keyword id="KW-1207">Sterol metabolism</keyword>
<keyword id="KW-0813">Transport</keyword>
<accession>M3XYN3</accession>
<gene>
    <name type="primary">APOA1</name>
</gene>
<proteinExistence type="inferred from homology"/>
<organism>
    <name type="scientific">Mustela putorius furo</name>
    <name type="common">European domestic ferret</name>
    <name type="synonym">Mustela furo</name>
    <dbReference type="NCBI Taxonomy" id="9669"/>
    <lineage>
        <taxon>Eukaryota</taxon>
        <taxon>Metazoa</taxon>
        <taxon>Chordata</taxon>
        <taxon>Craniata</taxon>
        <taxon>Vertebrata</taxon>
        <taxon>Euteleostomi</taxon>
        <taxon>Mammalia</taxon>
        <taxon>Eutheria</taxon>
        <taxon>Laurasiatheria</taxon>
        <taxon>Carnivora</taxon>
        <taxon>Caniformia</taxon>
        <taxon>Musteloidea</taxon>
        <taxon>Mustelidae</taxon>
        <taxon>Mustelinae</taxon>
        <taxon>Mustela</taxon>
    </lineage>
</organism>
<sequence length="266" mass="30179">MKAVVLTLAVLFLTGSQARHFWQQDEPQSPWDRVKDLATVYVDAVKDGGRDYVAQFEASALGKQLNLKLLDNWDSLSGTVAKLREQIGPVTQEFWDNLEKETEALRQEMSKDLEEVKQKVQPYLDEFQKKWHEEVELYRQKVAPLGTELREGARQKLQELQEKLTPLGEELRDRARTHVDALRAHLAPYSDQLRERLATRLQALKEGGSASLAEYHAKASEHLSALSEKAKPALEDLRQGLLPVLESFKVSLLAAVDEAAKKLNTQ</sequence>
<name>APOA1_MUSPF</name>
<evidence type="ECO:0000250" key="1"/>
<evidence type="ECO:0000250" key="2">
    <source>
        <dbReference type="UniProtKB" id="G5BQH5"/>
    </source>
</evidence>
<evidence type="ECO:0000250" key="3">
    <source>
        <dbReference type="UniProtKB" id="P02647"/>
    </source>
</evidence>
<evidence type="ECO:0000250" key="4">
    <source>
        <dbReference type="UniProtKB" id="P02648"/>
    </source>
</evidence>
<evidence type="ECO:0000250" key="5">
    <source>
        <dbReference type="UniProtKB" id="P04639"/>
    </source>
</evidence>
<evidence type="ECO:0000255" key="6"/>
<evidence type="ECO:0000305" key="7"/>
<dbReference type="EMBL" id="AEYP01026780">
    <property type="status" value="NOT_ANNOTATED_CDS"/>
    <property type="molecule type" value="Genomic_DNA"/>
</dbReference>
<dbReference type="RefSeq" id="XP_004749957.1">
    <property type="nucleotide sequence ID" value="XM_004749900.3"/>
</dbReference>
<dbReference type="SMR" id="M3XYN3"/>
<dbReference type="FunCoup" id="M3XYN3">
    <property type="interactions" value="2"/>
</dbReference>
<dbReference type="STRING" id="9669.ENSMPUP00000004184"/>
<dbReference type="GeneID" id="101689587"/>
<dbReference type="KEGG" id="mpuf:101689587"/>
<dbReference type="CTD" id="335"/>
<dbReference type="eggNOG" id="ENOG502S1XQ">
    <property type="taxonomic scope" value="Eukaryota"/>
</dbReference>
<dbReference type="HOGENOM" id="CLU_058447_1_0_1"/>
<dbReference type="InParanoid" id="M3XYN3"/>
<dbReference type="OrthoDB" id="8727817at2759"/>
<dbReference type="Proteomes" id="UP000000715">
    <property type="component" value="Unplaced"/>
</dbReference>
<dbReference type="GO" id="GO:0042627">
    <property type="term" value="C:chylomicron"/>
    <property type="evidence" value="ECO:0007669"/>
    <property type="project" value="TreeGrafter"/>
</dbReference>
<dbReference type="GO" id="GO:1903561">
    <property type="term" value="C:extracellular vesicle"/>
    <property type="evidence" value="ECO:0007669"/>
    <property type="project" value="TreeGrafter"/>
</dbReference>
<dbReference type="GO" id="GO:0034364">
    <property type="term" value="C:high-density lipoprotein particle"/>
    <property type="evidence" value="ECO:0007669"/>
    <property type="project" value="UniProtKB-KW"/>
</dbReference>
<dbReference type="GO" id="GO:0034362">
    <property type="term" value="C:low-density lipoprotein particle"/>
    <property type="evidence" value="ECO:0007669"/>
    <property type="project" value="TreeGrafter"/>
</dbReference>
<dbReference type="GO" id="GO:0034361">
    <property type="term" value="C:very-low-density lipoprotein particle"/>
    <property type="evidence" value="ECO:0007669"/>
    <property type="project" value="TreeGrafter"/>
</dbReference>
<dbReference type="GO" id="GO:0120020">
    <property type="term" value="F:cholesterol transfer activity"/>
    <property type="evidence" value="ECO:0007669"/>
    <property type="project" value="TreeGrafter"/>
</dbReference>
<dbReference type="GO" id="GO:0060228">
    <property type="term" value="F:phosphatidylcholine-sterol O-acyltransferase activator activity"/>
    <property type="evidence" value="ECO:0007669"/>
    <property type="project" value="TreeGrafter"/>
</dbReference>
<dbReference type="GO" id="GO:0005543">
    <property type="term" value="F:phospholipid binding"/>
    <property type="evidence" value="ECO:0007669"/>
    <property type="project" value="TreeGrafter"/>
</dbReference>
<dbReference type="GO" id="GO:0042803">
    <property type="term" value="F:protein homodimerization activity"/>
    <property type="evidence" value="ECO:0000250"/>
    <property type="project" value="UniProtKB"/>
</dbReference>
<dbReference type="GO" id="GO:0055090">
    <property type="term" value="P:acylglycerol homeostasis"/>
    <property type="evidence" value="ECO:0007669"/>
    <property type="project" value="TreeGrafter"/>
</dbReference>
<dbReference type="GO" id="GO:0033344">
    <property type="term" value="P:cholesterol efflux"/>
    <property type="evidence" value="ECO:0007669"/>
    <property type="project" value="TreeGrafter"/>
</dbReference>
<dbReference type="GO" id="GO:0008203">
    <property type="term" value="P:cholesterol metabolic process"/>
    <property type="evidence" value="ECO:0007669"/>
    <property type="project" value="UniProtKB-KW"/>
</dbReference>
<dbReference type="GO" id="GO:0042157">
    <property type="term" value="P:lipoprotein metabolic process"/>
    <property type="evidence" value="ECO:0007669"/>
    <property type="project" value="InterPro"/>
</dbReference>
<dbReference type="GO" id="GO:0033700">
    <property type="term" value="P:phospholipid efflux"/>
    <property type="evidence" value="ECO:0007669"/>
    <property type="project" value="TreeGrafter"/>
</dbReference>
<dbReference type="GO" id="GO:0010875">
    <property type="term" value="P:positive regulation of cholesterol efflux"/>
    <property type="evidence" value="ECO:0000250"/>
    <property type="project" value="UniProtKB"/>
</dbReference>
<dbReference type="GO" id="GO:0050766">
    <property type="term" value="P:positive regulation of phagocytosis"/>
    <property type="evidence" value="ECO:0000250"/>
    <property type="project" value="UniProtKB"/>
</dbReference>
<dbReference type="GO" id="GO:1902995">
    <property type="term" value="P:positive regulation of phospholipid efflux"/>
    <property type="evidence" value="ECO:0000250"/>
    <property type="project" value="UniProtKB"/>
</dbReference>
<dbReference type="GO" id="GO:0050821">
    <property type="term" value="P:protein stabilization"/>
    <property type="evidence" value="ECO:0000250"/>
    <property type="project" value="UniProtKB"/>
</dbReference>
<dbReference type="FunFam" id="1.20.120.20:FF:000001">
    <property type="entry name" value="Apolipoprotein A-I"/>
    <property type="match status" value="1"/>
</dbReference>
<dbReference type="FunFam" id="1.20.5.20:FF:000001">
    <property type="entry name" value="apolipoprotein A-I"/>
    <property type="match status" value="1"/>
</dbReference>
<dbReference type="Gene3D" id="1.20.5.20">
    <property type="match status" value="1"/>
</dbReference>
<dbReference type="Gene3D" id="6.10.140.380">
    <property type="match status" value="1"/>
</dbReference>
<dbReference type="Gene3D" id="1.20.120.20">
    <property type="entry name" value="Apolipoprotein"/>
    <property type="match status" value="1"/>
</dbReference>
<dbReference type="InterPro" id="IPR000074">
    <property type="entry name" value="ApoA_E"/>
</dbReference>
<dbReference type="InterPro" id="IPR050163">
    <property type="entry name" value="Apolipoprotein_A1/A4/E"/>
</dbReference>
<dbReference type="PANTHER" id="PTHR18976">
    <property type="entry name" value="APOLIPOPROTEIN"/>
    <property type="match status" value="1"/>
</dbReference>
<dbReference type="PANTHER" id="PTHR18976:SF11">
    <property type="entry name" value="APOLIPOPROTEIN A-I"/>
    <property type="match status" value="1"/>
</dbReference>
<dbReference type="Pfam" id="PF01442">
    <property type="entry name" value="Apolipoprotein"/>
    <property type="match status" value="1"/>
</dbReference>
<dbReference type="SUPFAM" id="SSF58113">
    <property type="entry name" value="Apolipoprotein A-I"/>
    <property type="match status" value="1"/>
</dbReference>
<feature type="signal peptide" evidence="6">
    <location>
        <begin position="1"/>
        <end position="18"/>
    </location>
</feature>
<feature type="chain" id="PRO_0000432010" description="Proapolipoprotein A-I">
    <location>
        <begin position="19"/>
        <end position="266"/>
    </location>
</feature>
<feature type="chain" id="PRO_0000432011" description="Apolipoprotein A-I">
    <location>
        <begin position="25"/>
        <end position="266"/>
    </location>
</feature>
<feature type="chain" id="PRO_0000432012" description="Truncated apolipoprotein A-I" evidence="3">
    <location>
        <begin position="25"/>
        <end position="265"/>
    </location>
</feature>
<feature type="repeat" description="1">
    <location>
        <begin position="67"/>
        <end position="88"/>
    </location>
</feature>
<feature type="repeat" description="2">
    <location>
        <begin position="89"/>
        <end position="110"/>
    </location>
</feature>
<feature type="repeat" description="3; half-length">
    <location>
        <begin position="111"/>
        <end position="121"/>
    </location>
</feature>
<feature type="repeat" description="4">
    <location>
        <begin position="122"/>
        <end position="143"/>
    </location>
</feature>
<feature type="repeat" description="5">
    <location>
        <begin position="144"/>
        <end position="165"/>
    </location>
</feature>
<feature type="repeat" description="6">
    <location>
        <begin position="166"/>
        <end position="187"/>
    </location>
</feature>
<feature type="repeat" description="7">
    <location>
        <begin position="188"/>
        <end position="209"/>
    </location>
</feature>
<feature type="repeat" description="8">
    <location>
        <begin position="210"/>
        <end position="231"/>
    </location>
</feature>
<feature type="repeat" description="9; half-length">
    <location>
        <begin position="232"/>
        <end position="242"/>
    </location>
</feature>
<feature type="repeat" description="10">
    <location>
        <begin position="243"/>
        <end position="266"/>
    </location>
</feature>
<feature type="region of interest" description="10 X approximate tandem repeats">
    <location>
        <begin position="67"/>
        <end position="266"/>
    </location>
</feature>
<feature type="modified residue" description="Methionine sulfoxide" evidence="3">
    <location>
        <position position="109"/>
    </location>
</feature>
<protein>
    <recommendedName>
        <fullName>Apolipoprotein A-I</fullName>
        <shortName>Apo-AI</shortName>
        <shortName>ApoA-I</shortName>
    </recommendedName>
    <alternativeName>
        <fullName>Apolipoprotein A1</fullName>
    </alternativeName>
    <component>
        <recommendedName>
            <fullName>Proapolipoprotein A-I</fullName>
            <shortName>ProapoA-I</shortName>
        </recommendedName>
    </component>
    <component>
        <recommendedName>
            <fullName>Truncated apolipoprotein A-I</fullName>
        </recommendedName>
    </component>
</protein>
<reference key="1">
    <citation type="submission" date="2011-04" db="EMBL/GenBank/DDBJ databases">
        <authorList>
            <person name="Di Palma F."/>
            <person name="Alfoldi J."/>
            <person name="Johnson J."/>
            <person name="Jaffe D."/>
            <person name="Berlin A."/>
            <person name="Gnerre S."/>
            <person name="Grabherr M."/>
            <person name="Hall G."/>
            <person name="Lara M."/>
            <person name="MacCallum I."/>
            <person name="Mauceli E."/>
            <person name="Przyblyski D."/>
            <person name="Ribeiro F."/>
            <person name="Russell P."/>
            <person name="Sharpe T."/>
            <person name="Turner-Maier J."/>
            <person name="Walker B.J."/>
            <person name="Young S."/>
            <person name="Birren B."/>
            <person name="Lindblad-Toh K."/>
        </authorList>
    </citation>
    <scope>NUCLEOTIDE SEQUENCE [LARGE SCALE GENOMIC DNA]</scope>
    <source>
        <strain>ID#1420</strain>
    </source>
</reference>
<comment type="function">
    <text evidence="3">Participates in the reverse transport of cholesterol from tissues to the liver for excretion by promoting cholesterol efflux from tissues and by acting as a cofactor for the lecithin cholesterol acyltransferase (LCAT). As part of the SPAP complex, activates spermatozoa motility.</text>
</comment>
<comment type="subunit">
    <text evidence="2 3 5">Homodimer (By similarity). Interacts with APOA1BP and CLU. Component of a sperm activating protein complex (SPAP), consisting of APOA1, an immunoglobulin heavy chain, an immunoglobulin light chain and albumin. Interacts with NDRG1. Interacts with SCGB3A2 (By similarity). Interacts with NAXE and YJEFN3 (By similarity).</text>
</comment>
<comment type="subcellular location">
    <subcellularLocation>
        <location evidence="3">Secreted</location>
    </subcellularLocation>
</comment>
<comment type="PTM">
    <text evidence="4">Glycosylated.</text>
</comment>
<comment type="PTM">
    <text evidence="4">Palmitoylated.</text>
</comment>
<comment type="PTM">
    <text evidence="1">Phosphorylation sites are present in the extracellular medium.</text>
</comment>
<comment type="similarity">
    <text evidence="7">Belongs to the apolipoprotein A1/A4/E family.</text>
</comment>